<accession>B2I029</accession>
<comment type="function">
    <text evidence="1">Phosphorolytic 3'-5' exoribonuclease that plays an important role in tRNA 3'-end maturation. Removes nucleotide residues following the 3'-CCA terminus of tRNAs; can also add nucleotides to the ends of RNA molecules by using nucleoside diphosphates as substrates, but this may not be physiologically important. Probably plays a role in initiation of 16S rRNA degradation (leading to ribosome degradation) during starvation.</text>
</comment>
<comment type="catalytic activity">
    <reaction evidence="1">
        <text>tRNA(n+1) + phosphate = tRNA(n) + a ribonucleoside 5'-diphosphate</text>
        <dbReference type="Rhea" id="RHEA:10628"/>
        <dbReference type="Rhea" id="RHEA-COMP:17343"/>
        <dbReference type="Rhea" id="RHEA-COMP:17344"/>
        <dbReference type="ChEBI" id="CHEBI:43474"/>
        <dbReference type="ChEBI" id="CHEBI:57930"/>
        <dbReference type="ChEBI" id="CHEBI:173114"/>
        <dbReference type="EC" id="2.7.7.56"/>
    </reaction>
</comment>
<comment type="subunit">
    <text evidence="1">Homohexameric ring arranged as a trimer of dimers.</text>
</comment>
<comment type="similarity">
    <text evidence="1">Belongs to the RNase PH family.</text>
</comment>
<proteinExistence type="inferred from homology"/>
<reference key="1">
    <citation type="journal article" date="2008" name="Antimicrob. Agents Chemother.">
        <title>Whole-genome pyrosequencing of an epidemic multidrug-resistant Acinetobacter baumannii strain belonging to the European clone II group.</title>
        <authorList>
            <person name="Iacono M."/>
            <person name="Villa L."/>
            <person name="Fortini D."/>
            <person name="Bordoni R."/>
            <person name="Imperi F."/>
            <person name="Bonnal R.J."/>
            <person name="Sicheritz-Ponten T."/>
            <person name="De Bellis G."/>
            <person name="Visca P."/>
            <person name="Cassone A."/>
            <person name="Carattoli A."/>
        </authorList>
    </citation>
    <scope>NUCLEOTIDE SEQUENCE [LARGE SCALE GENOMIC DNA]</scope>
    <source>
        <strain>ACICU</strain>
    </source>
</reference>
<feature type="chain" id="PRO_1000129308" description="Ribonuclease PH">
    <location>
        <begin position="1"/>
        <end position="238"/>
    </location>
</feature>
<feature type="binding site" evidence="1">
    <location>
        <position position="86"/>
    </location>
    <ligand>
        <name>phosphate</name>
        <dbReference type="ChEBI" id="CHEBI:43474"/>
        <note>substrate</note>
    </ligand>
</feature>
<feature type="binding site" evidence="1">
    <location>
        <begin position="124"/>
        <end position="126"/>
    </location>
    <ligand>
        <name>phosphate</name>
        <dbReference type="ChEBI" id="CHEBI:43474"/>
        <note>substrate</note>
    </ligand>
</feature>
<keyword id="KW-0548">Nucleotidyltransferase</keyword>
<keyword id="KW-0694">RNA-binding</keyword>
<keyword id="KW-0698">rRNA processing</keyword>
<keyword id="KW-0808">Transferase</keyword>
<keyword id="KW-0819">tRNA processing</keyword>
<keyword id="KW-0820">tRNA-binding</keyword>
<protein>
    <recommendedName>
        <fullName evidence="1">Ribonuclease PH</fullName>
        <shortName evidence="1">RNase PH</shortName>
        <ecNumber evidence="1">2.7.7.56</ecNumber>
    </recommendedName>
    <alternativeName>
        <fullName evidence="1">tRNA nucleotidyltransferase</fullName>
    </alternativeName>
</protein>
<dbReference type="EC" id="2.7.7.56" evidence="1"/>
<dbReference type="EMBL" id="CP000863">
    <property type="protein sequence ID" value="ACC55375.1"/>
    <property type="molecule type" value="Genomic_DNA"/>
</dbReference>
<dbReference type="RefSeq" id="WP_001217232.1">
    <property type="nucleotide sequence ID" value="NZ_CP031380.1"/>
</dbReference>
<dbReference type="SMR" id="B2I029"/>
<dbReference type="GeneID" id="92892004"/>
<dbReference type="KEGG" id="abc:ACICU_00063"/>
<dbReference type="HOGENOM" id="CLU_050858_0_0_6"/>
<dbReference type="Proteomes" id="UP000008839">
    <property type="component" value="Chromosome"/>
</dbReference>
<dbReference type="GO" id="GO:0000175">
    <property type="term" value="F:3'-5'-RNA exonuclease activity"/>
    <property type="evidence" value="ECO:0007669"/>
    <property type="project" value="UniProtKB-UniRule"/>
</dbReference>
<dbReference type="GO" id="GO:0000049">
    <property type="term" value="F:tRNA binding"/>
    <property type="evidence" value="ECO:0007669"/>
    <property type="project" value="UniProtKB-UniRule"/>
</dbReference>
<dbReference type="GO" id="GO:0009022">
    <property type="term" value="F:tRNA nucleotidyltransferase activity"/>
    <property type="evidence" value="ECO:0007669"/>
    <property type="project" value="UniProtKB-UniRule"/>
</dbReference>
<dbReference type="GO" id="GO:0016075">
    <property type="term" value="P:rRNA catabolic process"/>
    <property type="evidence" value="ECO:0007669"/>
    <property type="project" value="UniProtKB-UniRule"/>
</dbReference>
<dbReference type="GO" id="GO:0006364">
    <property type="term" value="P:rRNA processing"/>
    <property type="evidence" value="ECO:0007669"/>
    <property type="project" value="UniProtKB-KW"/>
</dbReference>
<dbReference type="GO" id="GO:0008033">
    <property type="term" value="P:tRNA processing"/>
    <property type="evidence" value="ECO:0007669"/>
    <property type="project" value="UniProtKB-UniRule"/>
</dbReference>
<dbReference type="CDD" id="cd11362">
    <property type="entry name" value="RNase_PH_bact"/>
    <property type="match status" value="1"/>
</dbReference>
<dbReference type="FunFam" id="3.30.230.70:FF:000003">
    <property type="entry name" value="Ribonuclease PH"/>
    <property type="match status" value="1"/>
</dbReference>
<dbReference type="Gene3D" id="3.30.230.70">
    <property type="entry name" value="GHMP Kinase, N-terminal domain"/>
    <property type="match status" value="1"/>
</dbReference>
<dbReference type="HAMAP" id="MF_00564">
    <property type="entry name" value="RNase_PH"/>
    <property type="match status" value="1"/>
</dbReference>
<dbReference type="InterPro" id="IPR001247">
    <property type="entry name" value="ExoRNase_PH_dom1"/>
</dbReference>
<dbReference type="InterPro" id="IPR015847">
    <property type="entry name" value="ExoRNase_PH_dom2"/>
</dbReference>
<dbReference type="InterPro" id="IPR036345">
    <property type="entry name" value="ExoRNase_PH_dom2_sf"/>
</dbReference>
<dbReference type="InterPro" id="IPR027408">
    <property type="entry name" value="PNPase/RNase_PH_dom_sf"/>
</dbReference>
<dbReference type="InterPro" id="IPR020568">
    <property type="entry name" value="Ribosomal_Su5_D2-typ_SF"/>
</dbReference>
<dbReference type="InterPro" id="IPR050080">
    <property type="entry name" value="RNase_PH"/>
</dbReference>
<dbReference type="InterPro" id="IPR002381">
    <property type="entry name" value="RNase_PH_bac-type"/>
</dbReference>
<dbReference type="InterPro" id="IPR018336">
    <property type="entry name" value="RNase_PH_CS"/>
</dbReference>
<dbReference type="NCBIfam" id="TIGR01966">
    <property type="entry name" value="RNasePH"/>
    <property type="match status" value="1"/>
</dbReference>
<dbReference type="PANTHER" id="PTHR11953">
    <property type="entry name" value="EXOSOME COMPLEX COMPONENT"/>
    <property type="match status" value="1"/>
</dbReference>
<dbReference type="PANTHER" id="PTHR11953:SF0">
    <property type="entry name" value="EXOSOME COMPLEX COMPONENT RRP41"/>
    <property type="match status" value="1"/>
</dbReference>
<dbReference type="Pfam" id="PF01138">
    <property type="entry name" value="RNase_PH"/>
    <property type="match status" value="1"/>
</dbReference>
<dbReference type="Pfam" id="PF03725">
    <property type="entry name" value="RNase_PH_C"/>
    <property type="match status" value="1"/>
</dbReference>
<dbReference type="SUPFAM" id="SSF55666">
    <property type="entry name" value="Ribonuclease PH domain 2-like"/>
    <property type="match status" value="1"/>
</dbReference>
<dbReference type="SUPFAM" id="SSF54211">
    <property type="entry name" value="Ribosomal protein S5 domain 2-like"/>
    <property type="match status" value="1"/>
</dbReference>
<dbReference type="PROSITE" id="PS01277">
    <property type="entry name" value="RIBONUCLEASE_PH"/>
    <property type="match status" value="1"/>
</dbReference>
<evidence type="ECO:0000255" key="1">
    <source>
        <dbReference type="HAMAP-Rule" id="MF_00564"/>
    </source>
</evidence>
<organism>
    <name type="scientific">Acinetobacter baumannii (strain ACICU)</name>
    <dbReference type="NCBI Taxonomy" id="405416"/>
    <lineage>
        <taxon>Bacteria</taxon>
        <taxon>Pseudomonadati</taxon>
        <taxon>Pseudomonadota</taxon>
        <taxon>Gammaproteobacteria</taxon>
        <taxon>Moraxellales</taxon>
        <taxon>Moraxellaceae</taxon>
        <taxon>Acinetobacter</taxon>
        <taxon>Acinetobacter calcoaceticus/baumannii complex</taxon>
    </lineage>
</organism>
<name>RNPH_ACIBC</name>
<sequence>MRIDQRALDQLREVKITRNYTRYAEGSVLVEFGHTKVLCTASIDNSVPRFLKGQGQGWVTAEYGMLPRSTHSRCDREAARGKQTGRTQEIQRLIGRSLRAMVDLKKLGENTITIDCDVIQADGGTRTASITGAAVALVDAMNVLLAQKKIKQDPLKGLVAAISVGMYQDEVLLDLCYEEDSNCQTDLNVVMTQAGEFIEIQGTAEDKPFTRAQSNAMLEMAEKGIAELIKKQQEALGW</sequence>
<gene>
    <name evidence="1" type="primary">rph</name>
    <name type="ordered locus">ACICU_00063</name>
</gene>